<evidence type="ECO:0000255" key="1">
    <source>
        <dbReference type="HAMAP-Rule" id="MF_02000"/>
    </source>
</evidence>
<evidence type="ECO:0000255" key="2">
    <source>
        <dbReference type="PROSITE-ProRule" id="PRU00285"/>
    </source>
</evidence>
<gene>
    <name evidence="1" type="primary">ibpA</name>
    <name type="ordered locus">ECA4403</name>
</gene>
<name>IBPA_PECAS</name>
<reference key="1">
    <citation type="journal article" date="2004" name="Proc. Natl. Acad. Sci. U.S.A.">
        <title>Genome sequence of the enterobacterial phytopathogen Erwinia carotovora subsp. atroseptica and characterization of virulence factors.</title>
        <authorList>
            <person name="Bell K.S."/>
            <person name="Sebaihia M."/>
            <person name="Pritchard L."/>
            <person name="Holden M.T.G."/>
            <person name="Hyman L.J."/>
            <person name="Holeva M.C."/>
            <person name="Thomson N.R."/>
            <person name="Bentley S.D."/>
            <person name="Churcher L.J.C."/>
            <person name="Mungall K."/>
            <person name="Atkin R."/>
            <person name="Bason N."/>
            <person name="Brooks K."/>
            <person name="Chillingworth T."/>
            <person name="Clark K."/>
            <person name="Doggett J."/>
            <person name="Fraser A."/>
            <person name="Hance Z."/>
            <person name="Hauser H."/>
            <person name="Jagels K."/>
            <person name="Moule S."/>
            <person name="Norbertczak H."/>
            <person name="Ormond D."/>
            <person name="Price C."/>
            <person name="Quail M.A."/>
            <person name="Sanders M."/>
            <person name="Walker D."/>
            <person name="Whitehead S."/>
            <person name="Salmond G.P.C."/>
            <person name="Birch P.R.J."/>
            <person name="Parkhill J."/>
            <person name="Toth I.K."/>
        </authorList>
    </citation>
    <scope>NUCLEOTIDE SEQUENCE [LARGE SCALE GENOMIC DNA]</scope>
    <source>
        <strain>SCRI 1043 / ATCC BAA-672</strain>
    </source>
</reference>
<accession>Q6CYV2</accession>
<proteinExistence type="inferred from homology"/>
<sequence>MRNPDFSPLYRSAIGFDRLFNLLETGQTQSNGGYPPYNVELVDENQYRIAIAVAGFAEQELDITAHDNLLIVKGAHAGEQVARNYLYQGIAERNFERKFQLAEHIQVKGANLENGLLYIDLERIVPEAMKPRRIEIK</sequence>
<organism>
    <name type="scientific">Pectobacterium atrosepticum (strain SCRI 1043 / ATCC BAA-672)</name>
    <name type="common">Erwinia carotovora subsp. atroseptica</name>
    <dbReference type="NCBI Taxonomy" id="218491"/>
    <lineage>
        <taxon>Bacteria</taxon>
        <taxon>Pseudomonadati</taxon>
        <taxon>Pseudomonadota</taxon>
        <taxon>Gammaproteobacteria</taxon>
        <taxon>Enterobacterales</taxon>
        <taxon>Pectobacteriaceae</taxon>
        <taxon>Pectobacterium</taxon>
    </lineage>
</organism>
<keyword id="KW-0143">Chaperone</keyword>
<keyword id="KW-0963">Cytoplasm</keyword>
<keyword id="KW-1185">Reference proteome</keyword>
<keyword id="KW-0346">Stress response</keyword>
<feature type="chain" id="PRO_0000126020" description="Small heat shock protein IbpA">
    <location>
        <begin position="1"/>
        <end position="137"/>
    </location>
</feature>
<feature type="domain" description="sHSP" evidence="2">
    <location>
        <begin position="28"/>
        <end position="137"/>
    </location>
</feature>
<protein>
    <recommendedName>
        <fullName evidence="1">Small heat shock protein IbpA</fullName>
    </recommendedName>
    <alternativeName>
        <fullName evidence="1">16 kDa heat shock protein A</fullName>
    </alternativeName>
</protein>
<comment type="function">
    <text evidence="1">Associates with aggregated proteins, together with IbpB, to stabilize and protect them from irreversible denaturation and extensive proteolysis during heat shock and oxidative stress. Aggregated proteins bound to the IbpAB complex are more efficiently refolded and reactivated by the ATP-dependent chaperone systems ClpB and DnaK/DnaJ/GrpE. Its activity is ATP-independent.</text>
</comment>
<comment type="subunit">
    <text evidence="1">Monomer. Forms homomultimers of about 100-150 subunits at optimal growth temperatures. Conformation changes to monomers at high temperatures or high ionic concentrations.</text>
</comment>
<comment type="subcellular location">
    <subcellularLocation>
        <location evidence="1">Cytoplasm</location>
    </subcellularLocation>
</comment>
<comment type="similarity">
    <text evidence="1 2">Belongs to the small heat shock protein (HSP20) family.</text>
</comment>
<dbReference type="EMBL" id="BX950851">
    <property type="protein sequence ID" value="CAG77299.1"/>
    <property type="molecule type" value="Genomic_DNA"/>
</dbReference>
<dbReference type="RefSeq" id="WP_005976748.1">
    <property type="nucleotide sequence ID" value="NC_004547.2"/>
</dbReference>
<dbReference type="SMR" id="Q6CYV2"/>
<dbReference type="STRING" id="218491.ECA4403"/>
<dbReference type="GeneID" id="93392371"/>
<dbReference type="KEGG" id="eca:ECA4403"/>
<dbReference type="eggNOG" id="COG0071">
    <property type="taxonomic scope" value="Bacteria"/>
</dbReference>
<dbReference type="HOGENOM" id="CLU_046737_4_2_6"/>
<dbReference type="OrthoDB" id="6871152at2"/>
<dbReference type="Proteomes" id="UP000007966">
    <property type="component" value="Chromosome"/>
</dbReference>
<dbReference type="GO" id="GO:0005737">
    <property type="term" value="C:cytoplasm"/>
    <property type="evidence" value="ECO:0007669"/>
    <property type="project" value="UniProtKB-SubCell"/>
</dbReference>
<dbReference type="GO" id="GO:0050821">
    <property type="term" value="P:protein stabilization"/>
    <property type="evidence" value="ECO:0007669"/>
    <property type="project" value="UniProtKB-UniRule"/>
</dbReference>
<dbReference type="CDD" id="cd06470">
    <property type="entry name" value="ACD_IbpA-B_like"/>
    <property type="match status" value="1"/>
</dbReference>
<dbReference type="FunFam" id="2.60.40.790:FF:000002">
    <property type="entry name" value="Small heat shock protein IbpA"/>
    <property type="match status" value="1"/>
</dbReference>
<dbReference type="Gene3D" id="2.60.40.790">
    <property type="match status" value="1"/>
</dbReference>
<dbReference type="HAMAP" id="MF_02000">
    <property type="entry name" value="HSP20_IbpA"/>
    <property type="match status" value="1"/>
</dbReference>
<dbReference type="InterPro" id="IPR002068">
    <property type="entry name" value="A-crystallin/Hsp20_dom"/>
</dbReference>
<dbReference type="InterPro" id="IPR037913">
    <property type="entry name" value="ACD_IbpA/B"/>
</dbReference>
<dbReference type="InterPro" id="IPR008978">
    <property type="entry name" value="HSP20-like_chaperone"/>
</dbReference>
<dbReference type="InterPro" id="IPR023728">
    <property type="entry name" value="HSP20_IbpA"/>
</dbReference>
<dbReference type="NCBIfam" id="NF008013">
    <property type="entry name" value="PRK10743.1"/>
    <property type="match status" value="1"/>
</dbReference>
<dbReference type="PANTHER" id="PTHR47062">
    <property type="match status" value="1"/>
</dbReference>
<dbReference type="PANTHER" id="PTHR47062:SF1">
    <property type="entry name" value="SMALL HEAT SHOCK PROTEIN IBPA"/>
    <property type="match status" value="1"/>
</dbReference>
<dbReference type="Pfam" id="PF00011">
    <property type="entry name" value="HSP20"/>
    <property type="match status" value="1"/>
</dbReference>
<dbReference type="SUPFAM" id="SSF49764">
    <property type="entry name" value="HSP20-like chaperones"/>
    <property type="match status" value="1"/>
</dbReference>
<dbReference type="PROSITE" id="PS01031">
    <property type="entry name" value="SHSP"/>
    <property type="match status" value="1"/>
</dbReference>